<feature type="chain" id="PRO_0000437118" description="Probable oxidoreductase patJ">
    <location>
        <begin position="1"/>
        <end position="323"/>
    </location>
</feature>
<feature type="region of interest" description="Disordered" evidence="3">
    <location>
        <begin position="291"/>
        <end position="323"/>
    </location>
</feature>
<feature type="compositionally biased region" description="Basic and acidic residues" evidence="3">
    <location>
        <begin position="305"/>
        <end position="316"/>
    </location>
</feature>
<name>PATJ_ASPCL</name>
<keyword id="KW-0968">Cytoplasmic vesicle</keyword>
<keyword id="KW-0560">Oxidoreductase</keyword>
<keyword id="KW-1185">Reference proteome</keyword>
<keyword id="KW-0926">Vacuole</keyword>
<sequence length="323" mass="36668">MAPFVPYHSSAGQATIVKFGGLLTTEFLEPPPGRCFLFRQTYRHTVEGPIPENLRKLINSPHKPKGPPPHFHQFQTEYFRVETGVLGIEVDGVLRRITPEDGEISVKAGSVHRFFIHPDSPESMTVYLSASDSGNDYQLDRIFFENWYGYWHDALLHDGGIDWIQFLAIQDGGDAYTPAPAWVPFRRQVGYWTCVIVGRWIGGLLGYKPFFREYTTDWDFAVAKMKGSVFQRHLVHEAFGAEKSWKQQTELEARVKPENAEFEQWTEDMSPTPLMLKPLAYEAGEFKGLQDQSANGVNGHATGVEAKKKQLGDMTRRRSGAQE</sequence>
<reference key="1">
    <citation type="journal article" date="2008" name="PLoS Genet.">
        <title>Genomic islands in the pathogenic filamentous fungus Aspergillus fumigatus.</title>
        <authorList>
            <person name="Fedorova N.D."/>
            <person name="Khaldi N."/>
            <person name="Joardar V.S."/>
            <person name="Maiti R."/>
            <person name="Amedeo P."/>
            <person name="Anderson M.J."/>
            <person name="Crabtree J."/>
            <person name="Silva J.C."/>
            <person name="Badger J.H."/>
            <person name="Albarraq A."/>
            <person name="Angiuoli S."/>
            <person name="Bussey H."/>
            <person name="Bowyer P."/>
            <person name="Cotty P.J."/>
            <person name="Dyer P.S."/>
            <person name="Egan A."/>
            <person name="Galens K."/>
            <person name="Fraser-Liggett C.M."/>
            <person name="Haas B.J."/>
            <person name="Inman J.M."/>
            <person name="Kent R."/>
            <person name="Lemieux S."/>
            <person name="Malavazi I."/>
            <person name="Orvis J."/>
            <person name="Roemer T."/>
            <person name="Ronning C.M."/>
            <person name="Sundaram J.P."/>
            <person name="Sutton G."/>
            <person name="Turner G."/>
            <person name="Venter J.C."/>
            <person name="White O.R."/>
            <person name="Whitty B.R."/>
            <person name="Youngman P."/>
            <person name="Wolfe K.H."/>
            <person name="Goldman G.H."/>
            <person name="Wortman J.R."/>
            <person name="Jiang B."/>
            <person name="Denning D.W."/>
            <person name="Nierman W.C."/>
        </authorList>
    </citation>
    <scope>NUCLEOTIDE SEQUENCE [LARGE SCALE GENOMIC DNA]</scope>
    <source>
        <strain>ATCC 1007 / CBS 513.65 / DSM 816 / NCTC 3887 / NRRL 1 / QM 1276 / 107</strain>
    </source>
</reference>
<reference key="2">
    <citation type="journal article" date="2004" name="Int. J. Epidemiol.">
        <title>Clinical trial of patulin in the common cold. 1944.</title>
        <authorList>
            <consortium name="Patulin Clinical Trials Committee, Medical Research Council"/>
        </authorList>
    </citation>
    <scope>BIOTECHNOLOGY</scope>
</reference>
<reference key="3">
    <citation type="journal article" date="2009" name="Microbiology">
        <title>Molecular cloning and functional characterization of two CYP619 cytochrome P450s involved in biosynthesis of patulin in Aspergillus clavatus.</title>
        <authorList>
            <person name="Artigot M.P."/>
            <person name="Loiseau N."/>
            <person name="Laffitte J."/>
            <person name="Mas-Reguieg L."/>
            <person name="Tadrist S."/>
            <person name="Oswald I.P."/>
            <person name="Puel O."/>
        </authorList>
    </citation>
    <scope>FUNCTION</scope>
</reference>
<reference key="4">
    <citation type="journal article" date="2012" name="Food Chem. Toxicol.">
        <title>DNA damage in organs of mice treated acutely with patulin, a known mycotoxin.</title>
        <authorList>
            <person name="de Melo F.T."/>
            <person name="de Oliveira I.M."/>
            <person name="Greggio S."/>
            <person name="Dacosta J.C."/>
            <person name="Guecheva T.N."/>
            <person name="Saffi J."/>
            <person name="Henriques J.A."/>
            <person name="Rosa R.M."/>
        </authorList>
    </citation>
    <scope>BIOTECHNOLOGY</scope>
</reference>
<reference key="5">
    <citation type="journal article" date="2016" name="Tumor Biol.">
        <title>The potential effect of patulin on mice bearing melanoma cells: an anti-tumour or carcinogenic effect?</title>
        <authorList>
            <person name="Boussabbeh M."/>
            <person name="Ben Salem I."/>
            <person name="Rjiba-Touati K."/>
            <person name="Bouyahya C."/>
            <person name="Neffati F."/>
            <person name="Najjar M.F."/>
            <person name="Bacha H."/>
            <person name="Abid-Essefi S."/>
        </authorList>
    </citation>
    <scope>BIOTECHNOLOGY</scope>
</reference>
<accession>A1CFL7</accession>
<gene>
    <name evidence="7" type="primary">patJ</name>
    <name type="ORF">ACLA_093650</name>
</gene>
<protein>
    <recommendedName>
        <fullName evidence="2">Probable oxidoreductase patJ</fullName>
        <ecNumber evidence="2">1.-.-.-</ecNumber>
    </recommendedName>
    <alternativeName>
        <fullName evidence="7">Patulin synthesis protein J</fullName>
    </alternativeName>
</protein>
<comment type="function">
    <text evidence="1 9">Probable oxidoreductase; part of the gene cluster that mediates the biosynthesis of patulin, an acetate-derived tetraketide mycotoxin produced by several fungal species that shows antimicrobial properties against several bacteria (By similarity). PatJ acts with patO in the vacuole to convert gentisyl alcohol to isoepoxydon (By similarity). The pathway begins with the synthesis of 6-methylsalicylic acid by the polyketide synthase (PKS) patK via condensation of acetate and malonate units. The 6-methylsalicylic acid decarboxylase patG then catalyzes the decarboxylation of 6-methylsalicylic acid to yield m-cresol (also known as 3-methylphenol). These first reactions occur in the cytosol. The intermediate m-cresol is then transported into the endoplasmic reticulum where the cytochrome P450 monooxygenase patH converts it to m-hydroxybenzyl alcohol, which is further converted to gentisyl alcohol by the cytochrome P450 monooxygenase patI. The oxidoreductases patJ and patO further convert gentisyl alcohol to isoepoxydon in the vacuole. PatN catalyzes then the transformation of isoepoxydon into phyllostine. The cluster protein patF is responsible for the conversion from phyllostine to neopatulin whereas the alcohol dehydrogenase patD converts neopatulin to E-ascladiol. The steps between isoepoxydon and E-ascladiol occur in the cytosol, and E-ascladiol is probably secreted to the extracellular space by one of the cluster-specific transporters patC or patM. Finally, the secreted patulin synthase patE catalyzes the conversion of E-ascladiol to patulin (Probable) (PubMed:19383676).</text>
</comment>
<comment type="pathway">
    <text evidence="9">Mycotoxin biosynthesis; patulin biosynthesis.</text>
</comment>
<comment type="subcellular location">
    <subcellularLocation>
        <location evidence="1">Vacuole lumen</location>
    </subcellularLocation>
    <subcellularLocation>
        <location evidence="1">Cytoplasmic vesicle lumen</location>
    </subcellularLocation>
</comment>
<comment type="biotechnology">
    <text evidence="4 5 6">Patulin was originally used as an antibiotic and specifically trialed to be used against the common cold, but it is no longer used for that purpose since it has been shown to induce immunological, neurological and gastrointestinal effects (PubMed:15082620). Genotoxic effects of patulin with dose-dependent increase in DNA strand breaks in brain, liver and kidneys have been detected in mice (PubMed:22222931). However, more recently, it has been proposed that patulin might also have anti-tumor properties (PubMed:26619846).</text>
</comment>
<comment type="similarity">
    <text evidence="8">Belongs to the oxidoreductase OpS7 family.</text>
</comment>
<evidence type="ECO:0000250" key="1">
    <source>
        <dbReference type="UniProtKB" id="A0A075TR41"/>
    </source>
</evidence>
<evidence type="ECO:0000250" key="2">
    <source>
        <dbReference type="UniProtKB" id="J5J930"/>
    </source>
</evidence>
<evidence type="ECO:0000256" key="3">
    <source>
        <dbReference type="SAM" id="MobiDB-lite"/>
    </source>
</evidence>
<evidence type="ECO:0000269" key="4">
    <source>
    </source>
</evidence>
<evidence type="ECO:0000269" key="5">
    <source>
    </source>
</evidence>
<evidence type="ECO:0000269" key="6">
    <source>
    </source>
</evidence>
<evidence type="ECO:0000303" key="7">
    <source>
    </source>
</evidence>
<evidence type="ECO:0000305" key="8"/>
<evidence type="ECO:0000305" key="9">
    <source>
    </source>
</evidence>
<proteinExistence type="evidence at protein level"/>
<organism>
    <name type="scientific">Aspergillus clavatus (strain ATCC 1007 / CBS 513.65 / DSM 816 / NCTC 3887 / NRRL 1 / QM 1276 / 107)</name>
    <dbReference type="NCBI Taxonomy" id="344612"/>
    <lineage>
        <taxon>Eukaryota</taxon>
        <taxon>Fungi</taxon>
        <taxon>Dikarya</taxon>
        <taxon>Ascomycota</taxon>
        <taxon>Pezizomycotina</taxon>
        <taxon>Eurotiomycetes</taxon>
        <taxon>Eurotiomycetidae</taxon>
        <taxon>Eurotiales</taxon>
        <taxon>Aspergillaceae</taxon>
        <taxon>Aspergillus</taxon>
        <taxon>Aspergillus subgen. Fumigati</taxon>
    </lineage>
</organism>
<dbReference type="EC" id="1.-.-.-" evidence="2"/>
<dbReference type="EMBL" id="DS027052">
    <property type="protein sequence ID" value="EAW11666.1"/>
    <property type="molecule type" value="Genomic_DNA"/>
</dbReference>
<dbReference type="RefSeq" id="XP_001273092.1">
    <property type="nucleotide sequence ID" value="XM_001273091.1"/>
</dbReference>
<dbReference type="SMR" id="A1CFL7"/>
<dbReference type="STRING" id="344612.A1CFL7"/>
<dbReference type="EnsemblFungi" id="EAW11666">
    <property type="protein sequence ID" value="EAW11666"/>
    <property type="gene ID" value="ACLA_093650"/>
</dbReference>
<dbReference type="GeneID" id="4704854"/>
<dbReference type="KEGG" id="act:ACLA_093650"/>
<dbReference type="VEuPathDB" id="FungiDB:ACLA_093650"/>
<dbReference type="eggNOG" id="ENOG502R8E2">
    <property type="taxonomic scope" value="Eukaryota"/>
</dbReference>
<dbReference type="HOGENOM" id="CLU_068080_0_0_1"/>
<dbReference type="OMA" id="GYKPFFR"/>
<dbReference type="OrthoDB" id="9976870at2759"/>
<dbReference type="UniPathway" id="UPA00918"/>
<dbReference type="Proteomes" id="UP000006701">
    <property type="component" value="Unassembled WGS sequence"/>
</dbReference>
<dbReference type="GO" id="GO:0060205">
    <property type="term" value="C:cytoplasmic vesicle lumen"/>
    <property type="evidence" value="ECO:0007669"/>
    <property type="project" value="UniProtKB-SubCell"/>
</dbReference>
<dbReference type="GO" id="GO:0005775">
    <property type="term" value="C:vacuolar lumen"/>
    <property type="evidence" value="ECO:0007669"/>
    <property type="project" value="UniProtKB-SubCell"/>
</dbReference>
<dbReference type="GO" id="GO:0005773">
    <property type="term" value="C:vacuole"/>
    <property type="evidence" value="ECO:0000250"/>
    <property type="project" value="GO_Central"/>
</dbReference>
<dbReference type="GO" id="GO:0016491">
    <property type="term" value="F:oxidoreductase activity"/>
    <property type="evidence" value="ECO:0007669"/>
    <property type="project" value="UniProtKB-KW"/>
</dbReference>
<dbReference type="GO" id="GO:0140723">
    <property type="term" value="P:patulin biosynthetic process"/>
    <property type="evidence" value="ECO:0000250"/>
    <property type="project" value="GO_Central"/>
</dbReference>
<dbReference type="Gene3D" id="2.60.120.10">
    <property type="entry name" value="Jelly Rolls"/>
    <property type="match status" value="1"/>
</dbReference>
<dbReference type="InterPro" id="IPR014710">
    <property type="entry name" value="RmlC-like_jellyroll"/>
</dbReference>
<dbReference type="InterPro" id="IPR011051">
    <property type="entry name" value="RmlC_Cupin_sf"/>
</dbReference>
<dbReference type="SUPFAM" id="SSF51182">
    <property type="entry name" value="RmlC-like cupins"/>
    <property type="match status" value="1"/>
</dbReference>